<comment type="function">
    <text>Could be involved in overcoming restriction barriers during establishment after conjugative transfer.</text>
</comment>
<comment type="induction">
    <text>Expression is decreased in the presence of KorA and KorC.</text>
</comment>
<comment type="similarity">
    <text evidence="1">Belongs to the antirestriction protein family.</text>
</comment>
<organism>
    <name type="scientific">Escherichia coli</name>
    <dbReference type="NCBI Taxonomy" id="562"/>
    <lineage>
        <taxon>Bacteria</taxon>
        <taxon>Pseudomonadati</taxon>
        <taxon>Pseudomonadota</taxon>
        <taxon>Gammaproteobacteria</taxon>
        <taxon>Enterobacterales</taxon>
        <taxon>Enterobacteriaceae</taxon>
        <taxon>Escherichia</taxon>
    </lineage>
</organism>
<proteinExistence type="evidence at transcript level"/>
<name>KLCA2_ECOLX</name>
<protein>
    <recommendedName>
        <fullName>Antirestriction protein KlcA</fullName>
    </recommendedName>
</protein>
<accession>P52603</accession>
<accession>Q47333</accession>
<geneLocation type="plasmid">
    <name>IncP-alpha RK2</name>
</geneLocation>
<feature type="chain" id="PRO_0000068376" description="Antirestriction protein KlcA">
    <location>
        <begin position="1"/>
        <end position="146"/>
    </location>
</feature>
<feature type="sequence conflict" description="In Ref. 2; AAA75284." evidence="1" ref="2">
    <original>V</original>
    <variation>VMF</variation>
    <location>
        <position position="4"/>
    </location>
</feature>
<feature type="sequence conflict" description="In Ref. 2; AAA75284." evidence="1" ref="2">
    <original>L</original>
    <variation>P</variation>
    <location>
        <position position="24"/>
    </location>
</feature>
<feature type="sequence conflict" description="In Ref. 2; AAA75284." evidence="1" ref="2">
    <original>L</original>
    <variation>P</variation>
    <location>
        <position position="33"/>
    </location>
</feature>
<feature type="sequence conflict" description="In Ref. 2; AAA75284." evidence="1" ref="2">
    <original>R</original>
    <variation>P</variation>
    <location>
        <position position="77"/>
    </location>
</feature>
<sequence>MTDVQIPSPIVATRVAEADRLRFLPTYFGPSMLRMLRGEALVFGWMGRLCAAYHGGFWHFYTLSNGGFYMAPEHDGRLRIEVDGNGFAGELSADAAGIVATLFALNQLCAELAGTADADALIDRYHHLAAFASEHAEAAAIYRAID</sequence>
<evidence type="ECO:0000305" key="1"/>
<reference key="1">
    <citation type="journal article" date="1994" name="J. Bacteriol.">
        <title>Structure, expression, and regulation of the kilC operon of promiscuous IncP alpha plasmids.</title>
        <authorList>
            <person name="Larsen M.H."/>
            <person name="Figurski D.H."/>
        </authorList>
    </citation>
    <scope>NUCLEOTIDE SEQUENCE [GENOMIC DNA]</scope>
</reference>
<reference key="2">
    <citation type="journal article" date="1995" name="Microbiology">
        <title>Evolution of the korA-oriV segment of promiscuous IncP plasmids.</title>
        <authorList>
            <person name="Thomas C.M."/>
            <person name="Smith C.A."/>
            <person name="Ibbotson J.P."/>
            <person name="Johnston L."/>
            <person name="Wang N."/>
        </authorList>
    </citation>
    <scope>NUCLEOTIDE SEQUENCE [GENOMIC DNA]</scope>
</reference>
<gene>
    <name type="primary">klcA</name>
    <name type="synonym">kilC</name>
</gene>
<dbReference type="EMBL" id="U05773">
    <property type="protein sequence ID" value="AAA57448.1"/>
    <property type="molecule type" value="Genomic_DNA"/>
</dbReference>
<dbReference type="EMBL" id="L13392">
    <property type="protein sequence ID" value="AAA75284.1"/>
    <property type="molecule type" value="Genomic_DNA"/>
</dbReference>
<dbReference type="PIR" id="A55857">
    <property type="entry name" value="A55857"/>
</dbReference>
<dbReference type="PIR" id="I41323">
    <property type="entry name" value="I41323"/>
</dbReference>
<dbReference type="RefSeq" id="WP_011205777.1">
    <property type="nucleotide sequence ID" value="NZ_PP591959.1"/>
</dbReference>
<dbReference type="SMR" id="P52603"/>
<dbReference type="IntAct" id="P52603">
    <property type="interactions" value="1"/>
</dbReference>
<dbReference type="Gene3D" id="3.30.70.3580">
    <property type="entry name" value="Antirestriction protein"/>
    <property type="match status" value="1"/>
</dbReference>
<dbReference type="InterPro" id="IPR004914">
    <property type="entry name" value="Antirestrict"/>
</dbReference>
<dbReference type="InterPro" id="IPR042297">
    <property type="entry name" value="Antirestriction_sf"/>
</dbReference>
<dbReference type="Pfam" id="PF03230">
    <property type="entry name" value="Antirestrict"/>
    <property type="match status" value="1"/>
</dbReference>
<keyword id="KW-0614">Plasmid</keyword>